<gene>
    <name evidence="3" type="primary">TAC1</name>
    <name evidence="5" type="ordered locus">Os09g0529300</name>
    <name evidence="4" type="ordered locus">LOC_Os09g35980</name>
    <name evidence="6" type="ORF">OsJ_30092</name>
</gene>
<name>TAC1_ORYSJ</name>
<accession>Q0J059</accession>
<accession>B7EBP2</accession>
<accession>B9G4P4</accession>
<comment type="function">
    <text evidence="2">Involved in the regulation of tiller growth angle (PubMed:17908158). Promotes horizontal shoot growth (PubMed:17908158). TAC1 and LAZY1 play opposite functions in the regulation of tiller growth angle (PubMed:17908158).</text>
</comment>
<comment type="alternative products">
    <event type="alternative splicing"/>
    <isoform>
        <id>Q0J059-1</id>
        <name>1</name>
        <sequence type="displayed"/>
    </isoform>
    <isoform>
        <id>Q0J059-2</id>
        <name>2</name>
        <sequence type="described" ref="VSP_060745 VSP_060746"/>
    </isoform>
</comment>
<comment type="tissue specificity">
    <text evidence="2">Expressed in the leaf sheath pulvinus, tiller base and tiller node.</text>
</comment>
<comment type="miscellaneous">
    <text evidence="2">Plants silencing TAC1 exhibit erect tillers with a very small tiller angle.</text>
</comment>
<comment type="similarity">
    <text evidence="4">Belongs to the TAC family.</text>
</comment>
<feature type="chain" id="PRO_0000451025" description="Protein TILLER ANGLE CONTROL 1">
    <location>
        <begin position="1"/>
        <end position="259"/>
    </location>
</feature>
<feature type="region of interest" description="Disordered" evidence="1">
    <location>
        <begin position="96"/>
        <end position="123"/>
    </location>
</feature>
<feature type="region of interest" description="Disordered" evidence="1">
    <location>
        <begin position="206"/>
        <end position="226"/>
    </location>
</feature>
<feature type="region of interest" description="Disordered" evidence="1">
    <location>
        <begin position="239"/>
        <end position="259"/>
    </location>
</feature>
<feature type="short sequence motif" description="IGT motif" evidence="4">
    <location>
        <begin position="56"/>
        <end position="62"/>
    </location>
</feature>
<feature type="compositionally biased region" description="Low complexity" evidence="1">
    <location>
        <begin position="109"/>
        <end position="119"/>
    </location>
</feature>
<feature type="splice variant" id="VSP_060745" description="In isoform 2.">
    <original>MALKVFNWLNRKKHSNVEYCTINENK</original>
    <variation>MSSIAPSMRTRVRIPGYLSFMYHMFCCSHVVNSCFFSSIFFPDGV</variation>
    <location>
        <begin position="1"/>
        <end position="26"/>
    </location>
</feature>
<feature type="splice variant" id="VSP_060746" description="In isoform 2.">
    <original>MRKMLGKKIHPEQLNGRSNAEGPVTA</original>
    <variation>WFSSSLLYLLSLVTLYFTSLEFITLCSMVSAPHLTHMFYHIATTGVSIMHLASL</variation>
    <location>
        <begin position="234"/>
        <end position="259"/>
    </location>
</feature>
<evidence type="ECO:0000256" key="1">
    <source>
        <dbReference type="SAM" id="MobiDB-lite"/>
    </source>
</evidence>
<evidence type="ECO:0000269" key="2">
    <source>
    </source>
</evidence>
<evidence type="ECO:0000303" key="3">
    <source>
    </source>
</evidence>
<evidence type="ECO:0000305" key="4"/>
<evidence type="ECO:0000312" key="5">
    <source>
        <dbReference type="EMBL" id="BAT09079.1"/>
    </source>
</evidence>
<evidence type="ECO:0000312" key="6">
    <source>
        <dbReference type="EMBL" id="EEE70092.1"/>
    </source>
</evidence>
<reference key="1">
    <citation type="journal article" date="2005" name="Nature">
        <title>The map-based sequence of the rice genome.</title>
        <authorList>
            <consortium name="International rice genome sequencing project (IRGSP)"/>
        </authorList>
    </citation>
    <scope>NUCLEOTIDE SEQUENCE [LARGE SCALE GENOMIC DNA]</scope>
    <source>
        <strain>cv. Nipponbare</strain>
    </source>
</reference>
<reference key="2">
    <citation type="journal article" date="2008" name="Nucleic Acids Res.">
        <title>The rice annotation project database (RAP-DB): 2008 update.</title>
        <authorList>
            <consortium name="The rice annotation project (RAP)"/>
        </authorList>
    </citation>
    <scope>GENOME REANNOTATION</scope>
    <source>
        <strain>cv. Nipponbare</strain>
    </source>
</reference>
<reference key="3">
    <citation type="journal article" date="2013" name="Rice">
        <title>Improvement of the Oryza sativa Nipponbare reference genome using next generation sequence and optical map data.</title>
        <authorList>
            <person name="Kawahara Y."/>
            <person name="de la Bastide M."/>
            <person name="Hamilton J.P."/>
            <person name="Kanamori H."/>
            <person name="McCombie W.R."/>
            <person name="Ouyang S."/>
            <person name="Schwartz D.C."/>
            <person name="Tanaka T."/>
            <person name="Wu J."/>
            <person name="Zhou S."/>
            <person name="Childs K.L."/>
            <person name="Davidson R.M."/>
            <person name="Lin H."/>
            <person name="Quesada-Ocampo L."/>
            <person name="Vaillancourt B."/>
            <person name="Sakai H."/>
            <person name="Lee S.S."/>
            <person name="Kim J."/>
            <person name="Numa H."/>
            <person name="Itoh T."/>
            <person name="Buell C.R."/>
            <person name="Matsumoto T."/>
        </authorList>
    </citation>
    <scope>GENOME REANNOTATION</scope>
    <source>
        <strain>cv. Nipponbare</strain>
    </source>
</reference>
<reference key="4">
    <citation type="journal article" date="2005" name="PLoS Biol.">
        <title>The genomes of Oryza sativa: a history of duplications.</title>
        <authorList>
            <person name="Yu J."/>
            <person name="Wang J."/>
            <person name="Lin W."/>
            <person name="Li S."/>
            <person name="Li H."/>
            <person name="Zhou J."/>
            <person name="Ni P."/>
            <person name="Dong W."/>
            <person name="Hu S."/>
            <person name="Zeng C."/>
            <person name="Zhang J."/>
            <person name="Zhang Y."/>
            <person name="Li R."/>
            <person name="Xu Z."/>
            <person name="Li S."/>
            <person name="Li X."/>
            <person name="Zheng H."/>
            <person name="Cong L."/>
            <person name="Lin L."/>
            <person name="Yin J."/>
            <person name="Geng J."/>
            <person name="Li G."/>
            <person name="Shi J."/>
            <person name="Liu J."/>
            <person name="Lv H."/>
            <person name="Li J."/>
            <person name="Wang J."/>
            <person name="Deng Y."/>
            <person name="Ran L."/>
            <person name="Shi X."/>
            <person name="Wang X."/>
            <person name="Wu Q."/>
            <person name="Li C."/>
            <person name="Ren X."/>
            <person name="Wang J."/>
            <person name="Wang X."/>
            <person name="Li D."/>
            <person name="Liu D."/>
            <person name="Zhang X."/>
            <person name="Ji Z."/>
            <person name="Zhao W."/>
            <person name="Sun Y."/>
            <person name="Zhang Z."/>
            <person name="Bao J."/>
            <person name="Han Y."/>
            <person name="Dong L."/>
            <person name="Ji J."/>
            <person name="Chen P."/>
            <person name="Wu S."/>
            <person name="Liu J."/>
            <person name="Xiao Y."/>
            <person name="Bu D."/>
            <person name="Tan J."/>
            <person name="Yang L."/>
            <person name="Ye C."/>
            <person name="Zhang J."/>
            <person name="Xu J."/>
            <person name="Zhou Y."/>
            <person name="Yu Y."/>
            <person name="Zhang B."/>
            <person name="Zhuang S."/>
            <person name="Wei H."/>
            <person name="Liu B."/>
            <person name="Lei M."/>
            <person name="Yu H."/>
            <person name="Li Y."/>
            <person name="Xu H."/>
            <person name="Wei S."/>
            <person name="He X."/>
            <person name="Fang L."/>
            <person name="Zhang Z."/>
            <person name="Zhang Y."/>
            <person name="Huang X."/>
            <person name="Su Z."/>
            <person name="Tong W."/>
            <person name="Li J."/>
            <person name="Tong Z."/>
            <person name="Li S."/>
            <person name="Ye J."/>
            <person name="Wang L."/>
            <person name="Fang L."/>
            <person name="Lei T."/>
            <person name="Chen C.-S."/>
            <person name="Chen H.-C."/>
            <person name="Xu Z."/>
            <person name="Li H."/>
            <person name="Huang H."/>
            <person name="Zhang F."/>
            <person name="Xu H."/>
            <person name="Li N."/>
            <person name="Zhao C."/>
            <person name="Li S."/>
            <person name="Dong L."/>
            <person name="Huang Y."/>
            <person name="Li L."/>
            <person name="Xi Y."/>
            <person name="Qi Q."/>
            <person name="Li W."/>
            <person name="Zhang B."/>
            <person name="Hu W."/>
            <person name="Zhang Y."/>
            <person name="Tian X."/>
            <person name="Jiao Y."/>
            <person name="Liang X."/>
            <person name="Jin J."/>
            <person name="Gao L."/>
            <person name="Zheng W."/>
            <person name="Hao B."/>
            <person name="Liu S.-M."/>
            <person name="Wang W."/>
            <person name="Yuan L."/>
            <person name="Cao M."/>
            <person name="McDermott J."/>
            <person name="Samudrala R."/>
            <person name="Wang J."/>
            <person name="Wong G.K.-S."/>
            <person name="Yang H."/>
        </authorList>
    </citation>
    <scope>NUCLEOTIDE SEQUENCE [LARGE SCALE GENOMIC DNA]</scope>
    <source>
        <strain>cv. Nipponbare</strain>
    </source>
</reference>
<reference key="5">
    <citation type="journal article" date="2003" name="Science">
        <title>Collection, mapping, and annotation of over 28,000 cDNA clones from japonica rice.</title>
        <authorList>
            <consortium name="The rice full-length cDNA consortium"/>
        </authorList>
    </citation>
    <scope>NUCLEOTIDE SEQUENCE [LARGE SCALE MRNA] (ISOFORM 2)</scope>
    <source>
        <strain>cv. Nipponbare</strain>
    </source>
</reference>
<reference key="6">
    <citation type="journal article" date="2007" name="Plant J.">
        <title>TAC1, a major quantitative trait locus controlling tiller angle in rice.</title>
        <authorList>
            <person name="Yu B."/>
            <person name="Lin Z."/>
            <person name="Li H."/>
            <person name="Li X."/>
            <person name="Li J."/>
            <person name="Wang Y."/>
            <person name="Zhang X."/>
            <person name="Zhu Z."/>
            <person name="Zhai W."/>
            <person name="Wang X."/>
            <person name="Xie D."/>
            <person name="Sun C."/>
        </authorList>
    </citation>
    <scope>FUNCTION</scope>
</reference>
<sequence length="259" mass="28955">MALKVFNWLNRKKHSNVEYCTINENKAMEEKEDSLRASVTEQDTEALLLRDVLINGILAIGTLGHNVNSLCPESCIEQDEPIIMCDEKVEQEKCEEEKAEAKQDTPVTAPSEPASALEPAKMHSSSMKEDNFMCFVKEEILMHGMEVEDVPNIQERPLLMLEKVEKVRTTLADLFAAEAFSSSDAEDKCYPKIVIVAGASTSKPTSCMEKMHHKKPTKPTSKPLKATRKLSRVMRKMLGKKIHPEQLNGRSNAEGPVTA</sequence>
<dbReference type="EMBL" id="AP008215">
    <property type="protein sequence ID" value="BAF25656.2"/>
    <property type="molecule type" value="Genomic_DNA"/>
</dbReference>
<dbReference type="EMBL" id="AP014965">
    <property type="protein sequence ID" value="BAT09079.1"/>
    <property type="molecule type" value="Genomic_DNA"/>
</dbReference>
<dbReference type="EMBL" id="CM000146">
    <property type="protein sequence ID" value="EEE70092.1"/>
    <property type="molecule type" value="Genomic_DNA"/>
</dbReference>
<dbReference type="EMBL" id="AK066042">
    <property type="protein sequence ID" value="BAG89789.1"/>
    <property type="molecule type" value="mRNA"/>
</dbReference>
<dbReference type="RefSeq" id="NP_001409844.1">
    <molecule id="Q0J059-2"/>
    <property type="nucleotide sequence ID" value="NM_001422915.1"/>
</dbReference>
<dbReference type="RefSeq" id="XP_015612189.1">
    <property type="nucleotide sequence ID" value="XM_015756703.1"/>
</dbReference>
<dbReference type="RefSeq" id="XP_015612190.1">
    <property type="nucleotide sequence ID" value="XM_015756704.1"/>
</dbReference>
<dbReference type="RefSeq" id="XP_015612191.1">
    <property type="nucleotide sequence ID" value="XM_015756705.1"/>
</dbReference>
<dbReference type="RefSeq" id="XP_066159991.1">
    <molecule id="Q0J059-2"/>
    <property type="nucleotide sequence ID" value="XM_066303894.1"/>
</dbReference>
<dbReference type="RefSeq" id="XP_066159992.1">
    <molecule id="Q0J059-2"/>
    <property type="nucleotide sequence ID" value="XM_066303895.1"/>
</dbReference>
<dbReference type="RefSeq" id="XP_066159993.1">
    <molecule id="Q0J059-2"/>
    <property type="nucleotide sequence ID" value="XM_066303896.1"/>
</dbReference>
<dbReference type="RefSeq" id="XP_066159994.1">
    <molecule id="Q0J059-1"/>
    <property type="nucleotide sequence ID" value="XM_066303897.1"/>
</dbReference>
<dbReference type="RefSeq" id="XP_066159995.1">
    <molecule id="Q0J059-1"/>
    <property type="nucleotide sequence ID" value="XM_066303898.1"/>
</dbReference>
<dbReference type="SMR" id="Q0J059"/>
<dbReference type="FunCoup" id="Q0J059">
    <property type="interactions" value="249"/>
</dbReference>
<dbReference type="STRING" id="39947.B7EBP2"/>
<dbReference type="PaxDb" id="39947-B7EBP2"/>
<dbReference type="EnsemblPlants" id="Os09t0529300-02">
    <molecule id="Q0J059-1"/>
    <property type="protein sequence ID" value="Os09t0529300-02"/>
    <property type="gene ID" value="Os09g0529300"/>
</dbReference>
<dbReference type="GeneID" id="4347655"/>
<dbReference type="Gramene" id="Os09t0529300-02">
    <molecule id="Q0J059-1"/>
    <property type="protein sequence ID" value="Os09t0529300-02"/>
    <property type="gene ID" value="Os09g0529300"/>
</dbReference>
<dbReference type="KEGG" id="dosa:Os09g0529300"/>
<dbReference type="HOGENOM" id="CLU_079213_0_0_1"/>
<dbReference type="InParanoid" id="Q0J059"/>
<dbReference type="OMA" id="ACHEQDE"/>
<dbReference type="Proteomes" id="UP000000763">
    <property type="component" value="Chromosome 9"/>
</dbReference>
<dbReference type="Proteomes" id="UP000007752">
    <property type="component" value="Chromosome 9"/>
</dbReference>
<dbReference type="Proteomes" id="UP000059680">
    <property type="component" value="Chromosome 9"/>
</dbReference>
<dbReference type="ExpressionAtlas" id="Q0J059">
    <property type="expression patterns" value="baseline and differential"/>
</dbReference>
<dbReference type="GO" id="GO:0001763">
    <property type="term" value="P:morphogenesis of a branching structure"/>
    <property type="evidence" value="ECO:0000315"/>
    <property type="project" value="UniProtKB"/>
</dbReference>
<dbReference type="GO" id="GO:0060771">
    <property type="term" value="P:phyllotactic patterning"/>
    <property type="evidence" value="ECO:0000315"/>
    <property type="project" value="UniProtKB"/>
</dbReference>
<dbReference type="InterPro" id="IPR044989">
    <property type="entry name" value="TAC1"/>
</dbReference>
<dbReference type="PANTHER" id="PTHR38366">
    <property type="entry name" value="NAD-DEPENDENT PROTEIN DEACETYLASE HST1-LIKE PROTEIN"/>
    <property type="match status" value="1"/>
</dbReference>
<dbReference type="PANTHER" id="PTHR38366:SF1">
    <property type="entry name" value="PROTEIN TILLER ANGLE CONTROL 1"/>
    <property type="match status" value="1"/>
</dbReference>
<keyword id="KW-0025">Alternative splicing</keyword>
<keyword id="KW-0341">Growth regulation</keyword>
<keyword id="KW-1185">Reference proteome</keyword>
<organism>
    <name type="scientific">Oryza sativa subsp. japonica</name>
    <name type="common">Rice</name>
    <dbReference type="NCBI Taxonomy" id="39947"/>
    <lineage>
        <taxon>Eukaryota</taxon>
        <taxon>Viridiplantae</taxon>
        <taxon>Streptophyta</taxon>
        <taxon>Embryophyta</taxon>
        <taxon>Tracheophyta</taxon>
        <taxon>Spermatophyta</taxon>
        <taxon>Magnoliopsida</taxon>
        <taxon>Liliopsida</taxon>
        <taxon>Poales</taxon>
        <taxon>Poaceae</taxon>
        <taxon>BOP clade</taxon>
        <taxon>Oryzoideae</taxon>
        <taxon>Oryzeae</taxon>
        <taxon>Oryzinae</taxon>
        <taxon>Oryza</taxon>
        <taxon>Oryza sativa</taxon>
    </lineage>
</organism>
<protein>
    <recommendedName>
        <fullName evidence="3">Protein TILLER ANGLE CONTROL 1</fullName>
    </recommendedName>
</protein>
<proteinExistence type="evidence at transcript level"/>